<organism>
    <name type="scientific">Neisseria meningitidis serogroup A / serotype 4A (strain DSM 15465 / Z2491)</name>
    <dbReference type="NCBI Taxonomy" id="122587"/>
    <lineage>
        <taxon>Bacteria</taxon>
        <taxon>Pseudomonadati</taxon>
        <taxon>Pseudomonadota</taxon>
        <taxon>Betaproteobacteria</taxon>
        <taxon>Neisseriales</taxon>
        <taxon>Neisseriaceae</taxon>
        <taxon>Neisseria</taxon>
    </lineage>
</organism>
<evidence type="ECO:0000255" key="1">
    <source>
        <dbReference type="HAMAP-Rule" id="MF_01629"/>
    </source>
</evidence>
<dbReference type="EC" id="1.4.3.5" evidence="1"/>
<dbReference type="EMBL" id="AL157959">
    <property type="protein sequence ID" value="CAM08717.1"/>
    <property type="molecule type" value="Genomic_DNA"/>
</dbReference>
<dbReference type="PIR" id="G81849">
    <property type="entry name" value="G81849"/>
</dbReference>
<dbReference type="RefSeq" id="WP_002219133.1">
    <property type="nucleotide sequence ID" value="NC_003116.1"/>
</dbReference>
<dbReference type="SMR" id="Q9JTZ1"/>
<dbReference type="EnsemblBacteria" id="CAM08717">
    <property type="protein sequence ID" value="CAM08717"/>
    <property type="gene ID" value="NMA1572"/>
</dbReference>
<dbReference type="GeneID" id="93388004"/>
<dbReference type="KEGG" id="nma:NMA1572"/>
<dbReference type="HOGENOM" id="CLU_032263_2_2_4"/>
<dbReference type="UniPathway" id="UPA01068">
    <property type="reaction ID" value="UER00304"/>
</dbReference>
<dbReference type="UniPathway" id="UPA01068">
    <property type="reaction ID" value="UER00305"/>
</dbReference>
<dbReference type="Proteomes" id="UP000000626">
    <property type="component" value="Chromosome"/>
</dbReference>
<dbReference type="GO" id="GO:0010181">
    <property type="term" value="F:FMN binding"/>
    <property type="evidence" value="ECO:0007669"/>
    <property type="project" value="UniProtKB-UniRule"/>
</dbReference>
<dbReference type="GO" id="GO:0004733">
    <property type="term" value="F:pyridoxamine phosphate oxidase activity"/>
    <property type="evidence" value="ECO:0007669"/>
    <property type="project" value="UniProtKB-UniRule"/>
</dbReference>
<dbReference type="GO" id="GO:0008615">
    <property type="term" value="P:pyridoxine biosynthetic process"/>
    <property type="evidence" value="ECO:0007669"/>
    <property type="project" value="UniProtKB-KW"/>
</dbReference>
<dbReference type="FunFam" id="2.30.110.10:FF:000014">
    <property type="entry name" value="Pyridoxine/pyridoxamine 5'-phosphate oxidase"/>
    <property type="match status" value="1"/>
</dbReference>
<dbReference type="Gene3D" id="2.30.110.10">
    <property type="entry name" value="Electron Transport, Fmn-binding Protein, Chain A"/>
    <property type="match status" value="1"/>
</dbReference>
<dbReference type="HAMAP" id="MF_01629">
    <property type="entry name" value="PdxH"/>
    <property type="match status" value="1"/>
</dbReference>
<dbReference type="InterPro" id="IPR000659">
    <property type="entry name" value="Pyridox_Oxase"/>
</dbReference>
<dbReference type="InterPro" id="IPR019740">
    <property type="entry name" value="Pyridox_Oxase_CS"/>
</dbReference>
<dbReference type="InterPro" id="IPR011576">
    <property type="entry name" value="Pyridox_Oxase_N"/>
</dbReference>
<dbReference type="InterPro" id="IPR019576">
    <property type="entry name" value="Pyridoxamine_oxidase_dimer_C"/>
</dbReference>
<dbReference type="InterPro" id="IPR012349">
    <property type="entry name" value="Split_barrel_FMN-bd"/>
</dbReference>
<dbReference type="NCBIfam" id="TIGR00558">
    <property type="entry name" value="pdxH"/>
    <property type="match status" value="1"/>
</dbReference>
<dbReference type="NCBIfam" id="NF004231">
    <property type="entry name" value="PRK05679.1"/>
    <property type="match status" value="1"/>
</dbReference>
<dbReference type="PANTHER" id="PTHR10851:SF0">
    <property type="entry name" value="PYRIDOXINE-5'-PHOSPHATE OXIDASE"/>
    <property type="match status" value="1"/>
</dbReference>
<dbReference type="PANTHER" id="PTHR10851">
    <property type="entry name" value="PYRIDOXINE-5-PHOSPHATE OXIDASE"/>
    <property type="match status" value="1"/>
</dbReference>
<dbReference type="Pfam" id="PF10590">
    <property type="entry name" value="PNP_phzG_C"/>
    <property type="match status" value="1"/>
</dbReference>
<dbReference type="Pfam" id="PF01243">
    <property type="entry name" value="PNPOx_N"/>
    <property type="match status" value="1"/>
</dbReference>
<dbReference type="PIRSF" id="PIRSF000190">
    <property type="entry name" value="Pyd_amn-ph_oxd"/>
    <property type="match status" value="1"/>
</dbReference>
<dbReference type="SUPFAM" id="SSF50475">
    <property type="entry name" value="FMN-binding split barrel"/>
    <property type="match status" value="1"/>
</dbReference>
<dbReference type="PROSITE" id="PS01064">
    <property type="entry name" value="PYRIDOX_OXIDASE"/>
    <property type="match status" value="1"/>
</dbReference>
<name>PDXH_NEIMA</name>
<proteinExistence type="inferred from homology"/>
<reference key="1">
    <citation type="journal article" date="2000" name="Nature">
        <title>Complete DNA sequence of a serogroup A strain of Neisseria meningitidis Z2491.</title>
        <authorList>
            <person name="Parkhill J."/>
            <person name="Achtman M."/>
            <person name="James K.D."/>
            <person name="Bentley S.D."/>
            <person name="Churcher C.M."/>
            <person name="Klee S.R."/>
            <person name="Morelli G."/>
            <person name="Basham D."/>
            <person name="Brown D."/>
            <person name="Chillingworth T."/>
            <person name="Davies R.M."/>
            <person name="Davis P."/>
            <person name="Devlin K."/>
            <person name="Feltwell T."/>
            <person name="Hamlin N."/>
            <person name="Holroyd S."/>
            <person name="Jagels K."/>
            <person name="Leather S."/>
            <person name="Moule S."/>
            <person name="Mungall K.L."/>
            <person name="Quail M.A."/>
            <person name="Rajandream M.A."/>
            <person name="Rutherford K.M."/>
            <person name="Simmonds M."/>
            <person name="Skelton J."/>
            <person name="Whitehead S."/>
            <person name="Spratt B.G."/>
            <person name="Barrell B.G."/>
        </authorList>
    </citation>
    <scope>NUCLEOTIDE SEQUENCE [LARGE SCALE GENOMIC DNA]</scope>
    <source>
        <strain>DSM 15465 / Z2491</strain>
    </source>
</reference>
<feature type="chain" id="PRO_0000167726" description="Pyridoxine/pyridoxamine 5'-phosphate oxidase">
    <location>
        <begin position="1"/>
        <end position="210"/>
    </location>
</feature>
<feature type="binding site" evidence="1">
    <location>
        <begin position="7"/>
        <end position="10"/>
    </location>
    <ligand>
        <name>substrate</name>
    </ligand>
</feature>
<feature type="binding site" evidence="1">
    <location>
        <begin position="60"/>
        <end position="65"/>
    </location>
    <ligand>
        <name>FMN</name>
        <dbReference type="ChEBI" id="CHEBI:58210"/>
    </ligand>
</feature>
<feature type="binding site" evidence="1">
    <location>
        <position position="65"/>
    </location>
    <ligand>
        <name>substrate</name>
    </ligand>
</feature>
<feature type="binding site" evidence="1">
    <location>
        <begin position="75"/>
        <end position="76"/>
    </location>
    <ligand>
        <name>FMN</name>
        <dbReference type="ChEBI" id="CHEBI:58210"/>
    </ligand>
</feature>
<feature type="binding site" evidence="1">
    <location>
        <position position="81"/>
    </location>
    <ligand>
        <name>FMN</name>
        <dbReference type="ChEBI" id="CHEBI:58210"/>
    </ligand>
</feature>
<feature type="binding site" evidence="1">
    <location>
        <position position="82"/>
    </location>
    <ligand>
        <name>FMN</name>
        <dbReference type="ChEBI" id="CHEBI:58210"/>
    </ligand>
</feature>
<feature type="binding site" evidence="1">
    <location>
        <position position="104"/>
    </location>
    <ligand>
        <name>FMN</name>
        <dbReference type="ChEBI" id="CHEBI:58210"/>
    </ligand>
</feature>
<feature type="binding site" evidence="1">
    <location>
        <position position="122"/>
    </location>
    <ligand>
        <name>substrate</name>
    </ligand>
</feature>
<feature type="binding site" evidence="1">
    <location>
        <position position="126"/>
    </location>
    <ligand>
        <name>substrate</name>
    </ligand>
</feature>
<feature type="binding site" evidence="1">
    <location>
        <position position="130"/>
    </location>
    <ligand>
        <name>substrate</name>
    </ligand>
</feature>
<feature type="binding site" evidence="1">
    <location>
        <begin position="139"/>
        <end position="140"/>
    </location>
    <ligand>
        <name>FMN</name>
        <dbReference type="ChEBI" id="CHEBI:58210"/>
    </ligand>
</feature>
<feature type="binding site" evidence="1">
    <location>
        <position position="183"/>
    </location>
    <ligand>
        <name>FMN</name>
        <dbReference type="ChEBI" id="CHEBI:58210"/>
    </ligand>
</feature>
<feature type="binding site" evidence="1">
    <location>
        <begin position="189"/>
        <end position="191"/>
    </location>
    <ligand>
        <name>substrate</name>
    </ligand>
</feature>
<feature type="binding site" evidence="1">
    <location>
        <position position="193"/>
    </location>
    <ligand>
        <name>FMN</name>
        <dbReference type="ChEBI" id="CHEBI:58210"/>
    </ligand>
</feature>
<comment type="function">
    <text evidence="1">Catalyzes the oxidation of either pyridoxine 5'-phosphate (PNP) or pyridoxamine 5'-phosphate (PMP) into pyridoxal 5'-phosphate (PLP).</text>
</comment>
<comment type="catalytic activity">
    <reaction evidence="1">
        <text>pyridoxamine 5'-phosphate + O2 + H2O = pyridoxal 5'-phosphate + H2O2 + NH4(+)</text>
        <dbReference type="Rhea" id="RHEA:15817"/>
        <dbReference type="ChEBI" id="CHEBI:15377"/>
        <dbReference type="ChEBI" id="CHEBI:15379"/>
        <dbReference type="ChEBI" id="CHEBI:16240"/>
        <dbReference type="ChEBI" id="CHEBI:28938"/>
        <dbReference type="ChEBI" id="CHEBI:58451"/>
        <dbReference type="ChEBI" id="CHEBI:597326"/>
        <dbReference type="EC" id="1.4.3.5"/>
    </reaction>
</comment>
<comment type="catalytic activity">
    <reaction evidence="1">
        <text>pyridoxine 5'-phosphate + O2 = pyridoxal 5'-phosphate + H2O2</text>
        <dbReference type="Rhea" id="RHEA:15149"/>
        <dbReference type="ChEBI" id="CHEBI:15379"/>
        <dbReference type="ChEBI" id="CHEBI:16240"/>
        <dbReference type="ChEBI" id="CHEBI:58589"/>
        <dbReference type="ChEBI" id="CHEBI:597326"/>
        <dbReference type="EC" id="1.4.3.5"/>
    </reaction>
</comment>
<comment type="cofactor">
    <cofactor evidence="1">
        <name>FMN</name>
        <dbReference type="ChEBI" id="CHEBI:58210"/>
    </cofactor>
    <text evidence="1">Binds 1 FMN per subunit.</text>
</comment>
<comment type="pathway">
    <text evidence="1">Cofactor metabolism; pyridoxal 5'-phosphate salvage; pyridoxal 5'-phosphate from pyridoxamine 5'-phosphate: step 1/1.</text>
</comment>
<comment type="pathway">
    <text evidence="1">Cofactor metabolism; pyridoxal 5'-phosphate salvage; pyridoxal 5'-phosphate from pyridoxine 5'-phosphate: step 1/1.</text>
</comment>
<comment type="subunit">
    <text evidence="1">Homodimer.</text>
</comment>
<comment type="similarity">
    <text evidence="1">Belongs to the pyridoxamine 5'-phosphate oxidase family.</text>
</comment>
<sequence>MDLHNIREDYSKRELSEGDCADNPIEQFERWLDEAVRAQVNEPTAVNVAAVDGRGRPNSRMVLLKEVNSEGFVFFTNYHSRKGRSLDAHPFAAMTFFWPELERQVRVEGRVERLAEKLSDEYFESRPYQSRLGAWASAQSEVIPNKAVLVAKAAAVGLKHPLHVPRPPHWGGYIVIPDLIEFWQGRPSRLHDRIQYRLLDGGWIRERLSP</sequence>
<accession>Q9JTZ1</accession>
<accession>A1ISG1</accession>
<protein>
    <recommendedName>
        <fullName evidence="1">Pyridoxine/pyridoxamine 5'-phosphate oxidase</fullName>
        <ecNumber evidence="1">1.4.3.5</ecNumber>
    </recommendedName>
    <alternativeName>
        <fullName evidence="1">PNP/PMP oxidase</fullName>
        <shortName evidence="1">PNPOx</shortName>
    </alternativeName>
    <alternativeName>
        <fullName evidence="1">Pyridoxal 5'-phosphate synthase</fullName>
    </alternativeName>
</protein>
<gene>
    <name evidence="1" type="primary">pdxH</name>
    <name type="ordered locus">NMA1572</name>
</gene>
<keyword id="KW-0285">Flavoprotein</keyword>
<keyword id="KW-0288">FMN</keyword>
<keyword id="KW-0560">Oxidoreductase</keyword>
<keyword id="KW-0664">Pyridoxine biosynthesis</keyword>